<accession>Q81T09</accession>
<accession>Q6I190</accession>
<accession>Q6KV40</accession>
<keyword id="KW-0002">3D-structure</keyword>
<keyword id="KW-0328">Glycosyltransferase</keyword>
<keyword id="KW-1185">Reference proteome</keyword>
<keyword id="KW-0808">Transferase</keyword>
<reference key="1">
    <citation type="journal article" date="2003" name="Nature">
        <title>The genome sequence of Bacillus anthracis Ames and comparison to closely related bacteria.</title>
        <authorList>
            <person name="Read T.D."/>
            <person name="Peterson S.N."/>
            <person name="Tourasse N.J."/>
            <person name="Baillie L.W."/>
            <person name="Paulsen I.T."/>
            <person name="Nelson K.E."/>
            <person name="Tettelin H."/>
            <person name="Fouts D.E."/>
            <person name="Eisen J.A."/>
            <person name="Gill S.R."/>
            <person name="Holtzapple E.K."/>
            <person name="Okstad O.A."/>
            <person name="Helgason E."/>
            <person name="Rilstone J."/>
            <person name="Wu M."/>
            <person name="Kolonay J.F."/>
            <person name="Beanan M.J."/>
            <person name="Dodson R.J."/>
            <person name="Brinkac L.M."/>
            <person name="Gwinn M.L."/>
            <person name="DeBoy R.T."/>
            <person name="Madpu R."/>
            <person name="Daugherty S.C."/>
            <person name="Durkin A.S."/>
            <person name="Haft D.H."/>
            <person name="Nelson W.C."/>
            <person name="Peterson J.D."/>
            <person name="Pop M."/>
            <person name="Khouri H.M."/>
            <person name="Radune D."/>
            <person name="Benton J.L."/>
            <person name="Mahamoud Y."/>
            <person name="Jiang L."/>
            <person name="Hance I.R."/>
            <person name="Weidman J.F."/>
            <person name="Berry K.J."/>
            <person name="Plaut R.D."/>
            <person name="Wolf A.M."/>
            <person name="Watkins K.L."/>
            <person name="Nierman W.C."/>
            <person name="Hazen A."/>
            <person name="Cline R.T."/>
            <person name="Redmond C."/>
            <person name="Thwaite J.E."/>
            <person name="White O."/>
            <person name="Salzberg S.L."/>
            <person name="Thomason B."/>
            <person name="Friedlander A.M."/>
            <person name="Koehler T.M."/>
            <person name="Hanna P.C."/>
            <person name="Kolstoe A.-B."/>
            <person name="Fraser C.M."/>
        </authorList>
    </citation>
    <scope>NUCLEOTIDE SEQUENCE [LARGE SCALE GENOMIC DNA]</scope>
    <source>
        <strain>Ames / isolate Porton</strain>
    </source>
</reference>
<reference key="2">
    <citation type="journal article" date="2009" name="J. Bacteriol.">
        <title>The complete genome sequence of Bacillus anthracis Ames 'Ancestor'.</title>
        <authorList>
            <person name="Ravel J."/>
            <person name="Jiang L."/>
            <person name="Stanley S.T."/>
            <person name="Wilson M.R."/>
            <person name="Decker R.S."/>
            <person name="Read T.D."/>
            <person name="Worsham P."/>
            <person name="Keim P.S."/>
            <person name="Salzberg S.L."/>
            <person name="Fraser-Liggett C.M."/>
            <person name="Rasko D.A."/>
        </authorList>
    </citation>
    <scope>NUCLEOTIDE SEQUENCE [LARGE SCALE GENOMIC DNA]</scope>
    <source>
        <strain>Ames ancestor</strain>
    </source>
</reference>
<reference key="3">
    <citation type="submission" date="2004-01" db="EMBL/GenBank/DDBJ databases">
        <title>Complete genome sequence of Bacillus anthracis Sterne.</title>
        <authorList>
            <person name="Brettin T.S."/>
            <person name="Bruce D."/>
            <person name="Challacombe J.F."/>
            <person name="Gilna P."/>
            <person name="Han C."/>
            <person name="Hill K."/>
            <person name="Hitchcock P."/>
            <person name="Jackson P."/>
            <person name="Keim P."/>
            <person name="Longmire J."/>
            <person name="Lucas S."/>
            <person name="Okinaka R."/>
            <person name="Richardson P."/>
            <person name="Rubin E."/>
            <person name="Tice H."/>
        </authorList>
    </citation>
    <scope>NUCLEOTIDE SEQUENCE [LARGE SCALE GENOMIC DNA]</scope>
    <source>
        <strain>Sterne</strain>
    </source>
</reference>
<dbReference type="EC" id="2.4.2.1" evidence="2"/>
<dbReference type="EMBL" id="AE016879">
    <property type="protein sequence ID" value="AAP25422.1"/>
    <property type="molecule type" value="Genomic_DNA"/>
</dbReference>
<dbReference type="EMBL" id="AE017334">
    <property type="protein sequence ID" value="AAT30581.1"/>
    <property type="molecule type" value="Genomic_DNA"/>
</dbReference>
<dbReference type="EMBL" id="AE017225">
    <property type="protein sequence ID" value="AAT53692.1"/>
    <property type="molecule type" value="Genomic_DNA"/>
</dbReference>
<dbReference type="RefSeq" id="NP_843936.1">
    <property type="nucleotide sequence ID" value="NC_003997.3"/>
</dbReference>
<dbReference type="RefSeq" id="WP_000110707.1">
    <property type="nucleotide sequence ID" value="NZ_WXXJ01000014.1"/>
</dbReference>
<dbReference type="RefSeq" id="YP_027641.1">
    <property type="nucleotide sequence ID" value="NC_005945.1"/>
</dbReference>
<dbReference type="PDB" id="1XE3">
    <property type="method" value="X-ray"/>
    <property type="resolution" value="2.24 A"/>
    <property type="chains" value="A/B/C/D/E/F=1-235"/>
</dbReference>
<dbReference type="PDB" id="2AC7">
    <property type="method" value="X-ray"/>
    <property type="resolution" value="1.70 A"/>
    <property type="chains" value="A/B=1-235"/>
</dbReference>
<dbReference type="PDBsum" id="1XE3"/>
<dbReference type="PDBsum" id="2AC7"/>
<dbReference type="SMR" id="Q81T09"/>
<dbReference type="IntAct" id="Q81T09">
    <property type="interactions" value="1"/>
</dbReference>
<dbReference type="STRING" id="261594.GBAA_1483"/>
<dbReference type="DNASU" id="1087668"/>
<dbReference type="GeneID" id="93009578"/>
<dbReference type="KEGG" id="ban:BA_1483"/>
<dbReference type="KEGG" id="bar:GBAA_1483"/>
<dbReference type="KEGG" id="bat:BAS1372"/>
<dbReference type="PATRIC" id="fig|198094.11.peg.1455"/>
<dbReference type="eggNOG" id="COG0813">
    <property type="taxonomic scope" value="Bacteria"/>
</dbReference>
<dbReference type="HOGENOM" id="CLU_068457_2_0_9"/>
<dbReference type="OMA" id="PQCLLCG"/>
<dbReference type="OrthoDB" id="9782889at2"/>
<dbReference type="BRENDA" id="2.4.2.1">
    <property type="organism ID" value="634"/>
</dbReference>
<dbReference type="EvolutionaryTrace" id="Q81T09"/>
<dbReference type="Proteomes" id="UP000000427">
    <property type="component" value="Chromosome"/>
</dbReference>
<dbReference type="Proteomes" id="UP000000594">
    <property type="component" value="Chromosome"/>
</dbReference>
<dbReference type="GO" id="GO:0005829">
    <property type="term" value="C:cytosol"/>
    <property type="evidence" value="ECO:0007669"/>
    <property type="project" value="TreeGrafter"/>
</dbReference>
<dbReference type="GO" id="GO:0004731">
    <property type="term" value="F:purine-nucleoside phosphorylase activity"/>
    <property type="evidence" value="ECO:0007669"/>
    <property type="project" value="UniProtKB-UniRule"/>
</dbReference>
<dbReference type="GO" id="GO:0006152">
    <property type="term" value="P:purine nucleoside catabolic process"/>
    <property type="evidence" value="ECO:0007669"/>
    <property type="project" value="TreeGrafter"/>
</dbReference>
<dbReference type="CDD" id="cd09006">
    <property type="entry name" value="PNP_EcPNPI-like"/>
    <property type="match status" value="1"/>
</dbReference>
<dbReference type="Gene3D" id="3.40.50.1580">
    <property type="entry name" value="Nucleoside phosphorylase domain"/>
    <property type="match status" value="1"/>
</dbReference>
<dbReference type="HAMAP" id="MF_01627">
    <property type="entry name" value="Pur_nucleosid_phosp"/>
    <property type="match status" value="1"/>
</dbReference>
<dbReference type="InterPro" id="IPR004402">
    <property type="entry name" value="DeoD-type"/>
</dbReference>
<dbReference type="InterPro" id="IPR018016">
    <property type="entry name" value="Nucleoside_phosphorylase_CS"/>
</dbReference>
<dbReference type="InterPro" id="IPR000845">
    <property type="entry name" value="Nucleoside_phosphorylase_d"/>
</dbReference>
<dbReference type="InterPro" id="IPR035994">
    <property type="entry name" value="Nucleoside_phosphorylase_sf"/>
</dbReference>
<dbReference type="NCBIfam" id="TIGR00107">
    <property type="entry name" value="deoD"/>
    <property type="match status" value="1"/>
</dbReference>
<dbReference type="NCBIfam" id="NF004489">
    <property type="entry name" value="PRK05819.1"/>
    <property type="match status" value="1"/>
</dbReference>
<dbReference type="NCBIfam" id="NF009914">
    <property type="entry name" value="PRK13374.1"/>
    <property type="match status" value="1"/>
</dbReference>
<dbReference type="PANTHER" id="PTHR43691:SF11">
    <property type="entry name" value="FI09636P-RELATED"/>
    <property type="match status" value="1"/>
</dbReference>
<dbReference type="PANTHER" id="PTHR43691">
    <property type="entry name" value="URIDINE PHOSPHORYLASE"/>
    <property type="match status" value="1"/>
</dbReference>
<dbReference type="Pfam" id="PF01048">
    <property type="entry name" value="PNP_UDP_1"/>
    <property type="match status" value="1"/>
</dbReference>
<dbReference type="SUPFAM" id="SSF53167">
    <property type="entry name" value="Purine and uridine phosphorylases"/>
    <property type="match status" value="1"/>
</dbReference>
<dbReference type="PROSITE" id="PS01232">
    <property type="entry name" value="PNP_UDP_1"/>
    <property type="match status" value="1"/>
</dbReference>
<proteinExistence type="evidence at protein level"/>
<evidence type="ECO:0000250" key="1">
    <source>
        <dbReference type="UniProtKB" id="P50389"/>
    </source>
</evidence>
<evidence type="ECO:0000255" key="2">
    <source>
        <dbReference type="HAMAP-Rule" id="MF_01627"/>
    </source>
</evidence>
<evidence type="ECO:0007829" key="3">
    <source>
        <dbReference type="PDB" id="1XE3"/>
    </source>
</evidence>
<organism>
    <name type="scientific">Bacillus anthracis</name>
    <dbReference type="NCBI Taxonomy" id="1392"/>
    <lineage>
        <taxon>Bacteria</taxon>
        <taxon>Bacillati</taxon>
        <taxon>Bacillota</taxon>
        <taxon>Bacilli</taxon>
        <taxon>Bacillales</taxon>
        <taxon>Bacillaceae</taxon>
        <taxon>Bacillus</taxon>
        <taxon>Bacillus cereus group</taxon>
    </lineage>
</organism>
<protein>
    <recommendedName>
        <fullName evidence="2">Purine nucleoside phosphorylase DeoD-type</fullName>
        <shortName evidence="2">PNP</shortName>
        <ecNumber evidence="2">2.4.2.1</ecNumber>
    </recommendedName>
</protein>
<feature type="chain" id="PRO_0000063114" description="Purine nucleoside phosphorylase DeoD-type">
    <location>
        <begin position="1"/>
        <end position="235"/>
    </location>
</feature>
<feature type="active site" description="Proton donor" evidence="2">
    <location>
        <position position="204"/>
    </location>
</feature>
<feature type="binding site" evidence="1">
    <location>
        <position position="4"/>
    </location>
    <ligand>
        <name>a purine D-ribonucleoside</name>
        <dbReference type="ChEBI" id="CHEBI:142355"/>
        <note>ligand shared between dimeric partners</note>
    </ligand>
</feature>
<feature type="binding site" description="in other chain" evidence="1">
    <location>
        <position position="20"/>
    </location>
    <ligand>
        <name>phosphate</name>
        <dbReference type="ChEBI" id="CHEBI:43474"/>
        <note>ligand shared between dimeric partners</note>
    </ligand>
</feature>
<feature type="binding site" description="in other chain" evidence="1">
    <location>
        <position position="24"/>
    </location>
    <ligand>
        <name>phosphate</name>
        <dbReference type="ChEBI" id="CHEBI:43474"/>
        <note>ligand shared between dimeric partners</note>
    </ligand>
</feature>
<feature type="binding site" evidence="1">
    <location>
        <position position="43"/>
    </location>
    <ligand>
        <name>phosphate</name>
        <dbReference type="ChEBI" id="CHEBI:43474"/>
        <note>ligand shared between dimeric partners</note>
    </ligand>
</feature>
<feature type="binding site" description="in other chain" evidence="1">
    <location>
        <begin position="87"/>
        <end position="90"/>
    </location>
    <ligand>
        <name>phosphate</name>
        <dbReference type="ChEBI" id="CHEBI:43474"/>
        <note>ligand shared between dimeric partners</note>
    </ligand>
</feature>
<feature type="binding site" description="in other chain" evidence="1">
    <location>
        <begin position="179"/>
        <end position="181"/>
    </location>
    <ligand>
        <name>a purine D-ribonucleoside</name>
        <dbReference type="ChEBI" id="CHEBI:142355"/>
        <note>ligand shared between dimeric partners</note>
    </ligand>
</feature>
<feature type="binding site" description="in other chain" evidence="1">
    <location>
        <begin position="203"/>
        <end position="204"/>
    </location>
    <ligand>
        <name>a purine D-ribonucleoside</name>
        <dbReference type="ChEBI" id="CHEBI:142355"/>
        <note>ligand shared between dimeric partners</note>
    </ligand>
</feature>
<feature type="site" description="Important for catalytic activity" evidence="2">
    <location>
        <position position="217"/>
    </location>
</feature>
<feature type="strand" evidence="3">
    <location>
        <begin position="14"/>
        <end position="18"/>
    </location>
</feature>
<feature type="helix" evidence="3">
    <location>
        <begin position="22"/>
        <end position="32"/>
    </location>
</feature>
<feature type="strand" evidence="3">
    <location>
        <begin position="34"/>
        <end position="40"/>
    </location>
</feature>
<feature type="helix" evidence="3">
    <location>
        <begin position="42"/>
        <end position="44"/>
    </location>
</feature>
<feature type="strand" evidence="3">
    <location>
        <begin position="47"/>
        <end position="52"/>
    </location>
</feature>
<feature type="strand" evidence="3">
    <location>
        <begin position="55"/>
        <end position="60"/>
    </location>
</feature>
<feature type="helix" evidence="3">
    <location>
        <begin position="66"/>
        <end position="80"/>
    </location>
</feature>
<feature type="strand" evidence="3">
    <location>
        <begin position="84"/>
        <end position="93"/>
    </location>
</feature>
<feature type="strand" evidence="3">
    <location>
        <begin position="103"/>
        <end position="112"/>
    </location>
</feature>
<feature type="helix" evidence="3">
    <location>
        <begin position="115"/>
        <end position="119"/>
    </location>
</feature>
<feature type="helix" evidence="3">
    <location>
        <begin position="131"/>
        <end position="143"/>
    </location>
</feature>
<feature type="strand" evidence="3">
    <location>
        <begin position="148"/>
        <end position="155"/>
    </location>
</feature>
<feature type="helix" evidence="3">
    <location>
        <begin position="165"/>
        <end position="172"/>
    </location>
</feature>
<feature type="strand" evidence="3">
    <location>
        <begin position="177"/>
        <end position="181"/>
    </location>
</feature>
<feature type="helix" evidence="3">
    <location>
        <begin position="182"/>
        <end position="192"/>
    </location>
</feature>
<feature type="strand" evidence="3">
    <location>
        <begin position="195"/>
        <end position="205"/>
    </location>
</feature>
<feature type="turn" evidence="3">
    <location>
        <begin position="206"/>
        <end position="208"/>
    </location>
</feature>
<feature type="helix" evidence="3">
    <location>
        <begin position="214"/>
        <end position="231"/>
    </location>
</feature>
<comment type="function">
    <text evidence="2">Catalyzes the reversible phosphorolytic breakdown of the N-glycosidic bond in the beta-(deoxy)ribonucleoside molecules, with the formation of the corresponding free purine bases and pentose-1-phosphate.</text>
</comment>
<comment type="catalytic activity">
    <reaction evidence="2">
        <text>a purine D-ribonucleoside + phosphate = a purine nucleobase + alpha-D-ribose 1-phosphate</text>
        <dbReference type="Rhea" id="RHEA:19805"/>
        <dbReference type="ChEBI" id="CHEBI:26386"/>
        <dbReference type="ChEBI" id="CHEBI:43474"/>
        <dbReference type="ChEBI" id="CHEBI:57720"/>
        <dbReference type="ChEBI" id="CHEBI:142355"/>
        <dbReference type="EC" id="2.4.2.1"/>
    </reaction>
</comment>
<comment type="catalytic activity">
    <reaction evidence="2">
        <text>a purine 2'-deoxy-D-ribonucleoside + phosphate = a purine nucleobase + 2-deoxy-alpha-D-ribose 1-phosphate</text>
        <dbReference type="Rhea" id="RHEA:36431"/>
        <dbReference type="ChEBI" id="CHEBI:26386"/>
        <dbReference type="ChEBI" id="CHEBI:43474"/>
        <dbReference type="ChEBI" id="CHEBI:57259"/>
        <dbReference type="ChEBI" id="CHEBI:142361"/>
        <dbReference type="EC" id="2.4.2.1"/>
    </reaction>
</comment>
<comment type="subunit">
    <text evidence="2">Homohexamer; trimer of homodimers.</text>
</comment>
<comment type="similarity">
    <text evidence="2">Belongs to the PNP/UDP phosphorylase family.</text>
</comment>
<name>DEOD_BACAN</name>
<sequence length="235" mass="25675">MSVHIEAKQGEIAESILLPGDPLRAKYIAETFLEDVTCYNNVRGMLGFTGTYKGKRVSVQGTGMGVPSISIYVNELIQSYGVKNLIRVGTCGAIQKDVKVRDVIIAMTACTDSNMNRLTFPGFDFAPAANFDLLKKAYDAGTEKGLHVRVGNVLTADVFYRESMDMVKKLGDYGVLAVEMETTALYTLAAKYGVNALSVLTVSDHIFTGEETTSEERQTTFNEMIEIALDAAIQQ</sequence>
<gene>
    <name evidence="2" type="primary">deoD</name>
    <name type="ordered locus">BA_1483</name>
    <name type="ordered locus">GBAA_1483</name>
    <name type="ordered locus">BAS1372</name>
</gene>